<keyword id="KW-0067">ATP-binding</keyword>
<keyword id="KW-0547">Nucleotide-binding</keyword>
<keyword id="KW-1185">Reference proteome</keyword>
<keyword id="KW-0813">Transport</keyword>
<name>MKL_MYCTO</name>
<gene>
    <name type="primary">mkl</name>
    <name type="ordered locus">MT0684</name>
</gene>
<proteinExistence type="inferred from homology"/>
<evidence type="ECO:0000250" key="1"/>
<evidence type="ECO:0000255" key="2">
    <source>
        <dbReference type="PROSITE-ProRule" id="PRU00434"/>
    </source>
</evidence>
<evidence type="ECO:0000305" key="3"/>
<reference key="1">
    <citation type="journal article" date="2002" name="J. Bacteriol.">
        <title>Whole-genome comparison of Mycobacterium tuberculosis clinical and laboratory strains.</title>
        <authorList>
            <person name="Fleischmann R.D."/>
            <person name="Alland D."/>
            <person name="Eisen J.A."/>
            <person name="Carpenter L."/>
            <person name="White O."/>
            <person name="Peterson J.D."/>
            <person name="DeBoy R.T."/>
            <person name="Dodson R.J."/>
            <person name="Gwinn M.L."/>
            <person name="Haft D.H."/>
            <person name="Hickey E.K."/>
            <person name="Kolonay J.F."/>
            <person name="Nelson W.C."/>
            <person name="Umayam L.A."/>
            <person name="Ermolaeva M.D."/>
            <person name="Salzberg S.L."/>
            <person name="Delcher A."/>
            <person name="Utterback T.R."/>
            <person name="Weidman J.F."/>
            <person name="Khouri H.M."/>
            <person name="Gill J."/>
            <person name="Mikula A."/>
            <person name="Bishai W."/>
            <person name="Jacobs W.R. Jr."/>
            <person name="Venter J.C."/>
            <person name="Fraser C.M."/>
        </authorList>
    </citation>
    <scope>NUCLEOTIDE SEQUENCE [LARGE SCALE GENOMIC DNA]</scope>
    <source>
        <strain>CDC 1551 / Oshkosh</strain>
    </source>
</reference>
<protein>
    <recommendedName>
        <fullName>Probable ribonucleotide transport ATP-binding protein mkl</fullName>
    </recommendedName>
</protein>
<accession>P9WQL4</accession>
<accession>L0T762</accession>
<accession>O06784</accession>
<accession>P63357</accession>
<organism>
    <name type="scientific">Mycobacterium tuberculosis (strain CDC 1551 / Oshkosh)</name>
    <dbReference type="NCBI Taxonomy" id="83331"/>
    <lineage>
        <taxon>Bacteria</taxon>
        <taxon>Bacillati</taxon>
        <taxon>Actinomycetota</taxon>
        <taxon>Actinomycetes</taxon>
        <taxon>Mycobacteriales</taxon>
        <taxon>Mycobacteriaceae</taxon>
        <taxon>Mycobacterium</taxon>
        <taxon>Mycobacterium tuberculosis complex</taxon>
    </lineage>
</organism>
<comment type="function">
    <text evidence="1">Not known, could be involved in the transport of ribonucleotides.</text>
</comment>
<comment type="similarity">
    <text evidence="3">Belongs to the ABC transporter superfamily.</text>
</comment>
<comment type="sequence caution" evidence="3">
    <conflict type="erroneous initiation">
        <sequence resource="EMBL-CDS" id="AAK44909"/>
    </conflict>
</comment>
<feature type="chain" id="PRO_0000426755" description="Probable ribonucleotide transport ATP-binding protein mkl">
    <location>
        <begin position="1"/>
        <end position="359"/>
    </location>
</feature>
<feature type="domain" description="ABC transporter" evidence="2">
    <location>
        <begin position="28"/>
        <end position="264"/>
    </location>
</feature>
<feature type="binding site" evidence="2">
    <location>
        <begin position="60"/>
        <end position="67"/>
    </location>
    <ligand>
        <name>ATP</name>
        <dbReference type="ChEBI" id="CHEBI:30616"/>
    </ligand>
</feature>
<dbReference type="EMBL" id="AE000516">
    <property type="protein sequence ID" value="AAK44909.1"/>
    <property type="status" value="ALT_INIT"/>
    <property type="molecule type" value="Genomic_DNA"/>
</dbReference>
<dbReference type="PIR" id="B70534">
    <property type="entry name" value="B70534"/>
</dbReference>
<dbReference type="SMR" id="P9WQL4"/>
<dbReference type="KEGG" id="mtc:MT0684"/>
<dbReference type="PATRIC" id="fig|83331.31.peg.727"/>
<dbReference type="HOGENOM" id="CLU_000604_1_0_11"/>
<dbReference type="Proteomes" id="UP000001020">
    <property type="component" value="Chromosome"/>
</dbReference>
<dbReference type="GO" id="GO:0005524">
    <property type="term" value="F:ATP binding"/>
    <property type="evidence" value="ECO:0007669"/>
    <property type="project" value="UniProtKB-KW"/>
</dbReference>
<dbReference type="GO" id="GO:0016887">
    <property type="term" value="F:ATP hydrolysis activity"/>
    <property type="evidence" value="ECO:0007669"/>
    <property type="project" value="InterPro"/>
</dbReference>
<dbReference type="CDD" id="cd03261">
    <property type="entry name" value="ABC_Org_Solvent_Resistant"/>
    <property type="match status" value="1"/>
</dbReference>
<dbReference type="FunFam" id="3.40.50.300:FF:000192">
    <property type="entry name" value="Phospholipid ABC transporter ATP-binding protein MlaF"/>
    <property type="match status" value="1"/>
</dbReference>
<dbReference type="Gene3D" id="3.40.50.300">
    <property type="entry name" value="P-loop containing nucleotide triphosphate hydrolases"/>
    <property type="match status" value="1"/>
</dbReference>
<dbReference type="InterPro" id="IPR003593">
    <property type="entry name" value="AAA+_ATPase"/>
</dbReference>
<dbReference type="InterPro" id="IPR003439">
    <property type="entry name" value="ABC_transporter-like_ATP-bd"/>
</dbReference>
<dbReference type="InterPro" id="IPR017871">
    <property type="entry name" value="ABC_transporter-like_CS"/>
</dbReference>
<dbReference type="InterPro" id="IPR027417">
    <property type="entry name" value="P-loop_NTPase"/>
</dbReference>
<dbReference type="PANTHER" id="PTHR43023:SF6">
    <property type="entry name" value="INTERMEMBRANE PHOSPHOLIPID TRANSPORT SYSTEM ATP-BINDING PROTEIN MLAF"/>
    <property type="match status" value="1"/>
</dbReference>
<dbReference type="PANTHER" id="PTHR43023">
    <property type="entry name" value="PROTEIN TRIGALACTOSYLDIACYLGLYCEROL 3, CHLOROPLASTIC"/>
    <property type="match status" value="1"/>
</dbReference>
<dbReference type="Pfam" id="PF00005">
    <property type="entry name" value="ABC_tran"/>
    <property type="match status" value="1"/>
</dbReference>
<dbReference type="SMART" id="SM00382">
    <property type="entry name" value="AAA"/>
    <property type="match status" value="1"/>
</dbReference>
<dbReference type="SUPFAM" id="SSF52540">
    <property type="entry name" value="P-loop containing nucleoside triphosphate hydrolases"/>
    <property type="match status" value="1"/>
</dbReference>
<dbReference type="PROSITE" id="PS00211">
    <property type="entry name" value="ABC_TRANSPORTER_1"/>
    <property type="match status" value="1"/>
</dbReference>
<dbReference type="PROSITE" id="PS50893">
    <property type="entry name" value="ABC_TRANSPORTER_2"/>
    <property type="match status" value="1"/>
</dbReference>
<sequence length="359" mass="39394">MRYSDSYHTTGRWQPRASTEGFPMGVSIEVNGLTKSFGSSRIWEDVTLTIPAGEVSVLLGPSGTGKSVFLKSLIGLLRPERGSIIIDGTDIIECSAKELYEIRTLFGVLFQDGALFGSMNLYDNTAFPLREHTKKKESEIRDIVMEKLALVGLGGDEKKFPGEISGGMRKRAGLARALVLDPQIILCDEPDSGLDPVRTAYLSQLIMDINAQIDATILIVTHNINIARTVPDNMGMLFRKHLVMFGPREVLLTSDEPVVRQFLNGRRIGPIGMSEEKDEATMAEEQALLDAGHHAGGVEEIEGVPPQISATPGMPERKAVARRQARVREMLHTLPKKAQAAILDDLEGTHKYAVHEIGQ</sequence>